<reference key="1">
    <citation type="submission" date="2006-09" db="EMBL/GenBank/DDBJ databases">
        <title>Complete sequence of Rhodopseudomonas palustris BisA53.</title>
        <authorList>
            <consortium name="US DOE Joint Genome Institute"/>
            <person name="Copeland A."/>
            <person name="Lucas S."/>
            <person name="Lapidus A."/>
            <person name="Barry K."/>
            <person name="Detter J.C."/>
            <person name="Glavina del Rio T."/>
            <person name="Hammon N."/>
            <person name="Israni S."/>
            <person name="Dalin E."/>
            <person name="Tice H."/>
            <person name="Pitluck S."/>
            <person name="Chain P."/>
            <person name="Malfatti S."/>
            <person name="Shin M."/>
            <person name="Vergez L."/>
            <person name="Schmutz J."/>
            <person name="Larimer F."/>
            <person name="Land M."/>
            <person name="Hauser L."/>
            <person name="Pelletier D.A."/>
            <person name="Kyrpides N."/>
            <person name="Kim E."/>
            <person name="Harwood C.S."/>
            <person name="Oda Y."/>
            <person name="Richardson P."/>
        </authorList>
    </citation>
    <scope>NUCLEOTIDE SEQUENCE [LARGE SCALE GENOMIC DNA]</scope>
    <source>
        <strain>BisA53</strain>
    </source>
</reference>
<gene>
    <name evidence="1" type="primary">ugpC</name>
    <name type="ordered locus">RPE_0436</name>
</gene>
<proteinExistence type="inferred from homology"/>
<comment type="function">
    <text evidence="1">Part of the ABC transporter complex UgpBAEC involved in sn-glycerol-3-phosphate (G3P) import. Responsible for energy coupling to the transport system.</text>
</comment>
<comment type="catalytic activity">
    <reaction evidence="1">
        <text>sn-glycerol 3-phosphate(out) + ATP + H2O = sn-glycerol 3-phosphate(in) + ADP + phosphate + H(+)</text>
        <dbReference type="Rhea" id="RHEA:21668"/>
        <dbReference type="ChEBI" id="CHEBI:15377"/>
        <dbReference type="ChEBI" id="CHEBI:15378"/>
        <dbReference type="ChEBI" id="CHEBI:30616"/>
        <dbReference type="ChEBI" id="CHEBI:43474"/>
        <dbReference type="ChEBI" id="CHEBI:57597"/>
        <dbReference type="ChEBI" id="CHEBI:456216"/>
        <dbReference type="EC" id="7.6.2.10"/>
    </reaction>
</comment>
<comment type="subunit">
    <text evidence="1">The complex is composed of two ATP-binding proteins (UgpC), two transmembrane proteins (UgpA and UgpE) and a solute-binding protein (UgpB).</text>
</comment>
<comment type="subcellular location">
    <subcellularLocation>
        <location evidence="1">Cell inner membrane</location>
        <topology evidence="1">Peripheral membrane protein</topology>
    </subcellularLocation>
</comment>
<comment type="similarity">
    <text evidence="1">Belongs to the ABC transporter superfamily. sn-glycerol-3-phosphate importer (TC 3.A.1.1.3) family.</text>
</comment>
<accession>Q07UI9</accession>
<keyword id="KW-0067">ATP-binding</keyword>
<keyword id="KW-0997">Cell inner membrane</keyword>
<keyword id="KW-1003">Cell membrane</keyword>
<keyword id="KW-0472">Membrane</keyword>
<keyword id="KW-0547">Nucleotide-binding</keyword>
<keyword id="KW-0762">Sugar transport</keyword>
<keyword id="KW-1278">Translocase</keyword>
<keyword id="KW-0813">Transport</keyword>
<name>UGPC_RHOP5</name>
<feature type="chain" id="PRO_0000289773" description="sn-glycerol-3-phosphate import ATP-binding protein UgpC">
    <location>
        <begin position="1"/>
        <end position="361"/>
    </location>
</feature>
<feature type="domain" description="ABC transporter" evidence="1">
    <location>
        <begin position="4"/>
        <end position="235"/>
    </location>
</feature>
<feature type="binding site" evidence="1">
    <location>
        <begin position="37"/>
        <end position="44"/>
    </location>
    <ligand>
        <name>ATP</name>
        <dbReference type="ChEBI" id="CHEBI:30616"/>
    </ligand>
</feature>
<organism>
    <name type="scientific">Rhodopseudomonas palustris (strain BisA53)</name>
    <dbReference type="NCBI Taxonomy" id="316055"/>
    <lineage>
        <taxon>Bacteria</taxon>
        <taxon>Pseudomonadati</taxon>
        <taxon>Pseudomonadota</taxon>
        <taxon>Alphaproteobacteria</taxon>
        <taxon>Hyphomicrobiales</taxon>
        <taxon>Nitrobacteraceae</taxon>
        <taxon>Rhodopseudomonas</taxon>
    </lineage>
</organism>
<evidence type="ECO:0000255" key="1">
    <source>
        <dbReference type="HAMAP-Rule" id="MF_01727"/>
    </source>
</evidence>
<dbReference type="EC" id="7.6.2.10" evidence="1"/>
<dbReference type="EMBL" id="CP000463">
    <property type="protein sequence ID" value="ABJ04395.1"/>
    <property type="molecule type" value="Genomic_DNA"/>
</dbReference>
<dbReference type="SMR" id="Q07UI9"/>
<dbReference type="STRING" id="316055.RPE_0436"/>
<dbReference type="KEGG" id="rpe:RPE_0436"/>
<dbReference type="eggNOG" id="COG3842">
    <property type="taxonomic scope" value="Bacteria"/>
</dbReference>
<dbReference type="HOGENOM" id="CLU_000604_1_1_5"/>
<dbReference type="OrthoDB" id="8134152at2"/>
<dbReference type="GO" id="GO:0055052">
    <property type="term" value="C:ATP-binding cassette (ABC) transporter complex, substrate-binding subunit-containing"/>
    <property type="evidence" value="ECO:0007669"/>
    <property type="project" value="TreeGrafter"/>
</dbReference>
<dbReference type="GO" id="GO:0015430">
    <property type="term" value="F:ABC-type glycerol-3-phosphate transporter activity"/>
    <property type="evidence" value="ECO:0007669"/>
    <property type="project" value="UniProtKB-EC"/>
</dbReference>
<dbReference type="GO" id="GO:0005524">
    <property type="term" value="F:ATP binding"/>
    <property type="evidence" value="ECO:0007669"/>
    <property type="project" value="UniProtKB-KW"/>
</dbReference>
<dbReference type="GO" id="GO:0016887">
    <property type="term" value="F:ATP hydrolysis activity"/>
    <property type="evidence" value="ECO:0007669"/>
    <property type="project" value="InterPro"/>
</dbReference>
<dbReference type="GO" id="GO:0008643">
    <property type="term" value="P:carbohydrate transport"/>
    <property type="evidence" value="ECO:0007669"/>
    <property type="project" value="InterPro"/>
</dbReference>
<dbReference type="GO" id="GO:0001407">
    <property type="term" value="P:glycerophosphodiester transmembrane transport"/>
    <property type="evidence" value="ECO:0007669"/>
    <property type="project" value="TreeGrafter"/>
</dbReference>
<dbReference type="CDD" id="cd03301">
    <property type="entry name" value="ABC_MalK_N"/>
    <property type="match status" value="1"/>
</dbReference>
<dbReference type="FunFam" id="3.40.50.300:FF:000042">
    <property type="entry name" value="Maltose/maltodextrin ABC transporter, ATP-binding protein"/>
    <property type="match status" value="1"/>
</dbReference>
<dbReference type="Gene3D" id="2.40.50.100">
    <property type="match status" value="1"/>
</dbReference>
<dbReference type="Gene3D" id="3.40.50.300">
    <property type="entry name" value="P-loop containing nucleotide triphosphate hydrolases"/>
    <property type="match status" value="1"/>
</dbReference>
<dbReference type="InterPro" id="IPR003593">
    <property type="entry name" value="AAA+_ATPase"/>
</dbReference>
<dbReference type="InterPro" id="IPR003439">
    <property type="entry name" value="ABC_transporter-like_ATP-bd"/>
</dbReference>
<dbReference type="InterPro" id="IPR017871">
    <property type="entry name" value="ABC_transporter-like_CS"/>
</dbReference>
<dbReference type="InterPro" id="IPR015855">
    <property type="entry name" value="ABC_transpr_MalK-like"/>
</dbReference>
<dbReference type="InterPro" id="IPR047641">
    <property type="entry name" value="ABC_transpr_MalK/UgpC-like"/>
</dbReference>
<dbReference type="InterPro" id="IPR008995">
    <property type="entry name" value="Mo/tungstate-bd_C_term_dom"/>
</dbReference>
<dbReference type="InterPro" id="IPR027417">
    <property type="entry name" value="P-loop_NTPase"/>
</dbReference>
<dbReference type="NCBIfam" id="NF008653">
    <property type="entry name" value="PRK11650.1"/>
    <property type="match status" value="1"/>
</dbReference>
<dbReference type="PANTHER" id="PTHR43875">
    <property type="entry name" value="MALTODEXTRIN IMPORT ATP-BINDING PROTEIN MSMX"/>
    <property type="match status" value="1"/>
</dbReference>
<dbReference type="PANTHER" id="PTHR43875:SF12">
    <property type="entry name" value="SN-GLYCEROL-3-PHOSPHATE IMPORT ATP-BINDING PROTEIN UGPC"/>
    <property type="match status" value="1"/>
</dbReference>
<dbReference type="Pfam" id="PF00005">
    <property type="entry name" value="ABC_tran"/>
    <property type="match status" value="1"/>
</dbReference>
<dbReference type="SMART" id="SM00382">
    <property type="entry name" value="AAA"/>
    <property type="match status" value="1"/>
</dbReference>
<dbReference type="SUPFAM" id="SSF50331">
    <property type="entry name" value="MOP-like"/>
    <property type="match status" value="1"/>
</dbReference>
<dbReference type="SUPFAM" id="SSF52540">
    <property type="entry name" value="P-loop containing nucleoside triphosphate hydrolases"/>
    <property type="match status" value="1"/>
</dbReference>
<dbReference type="PROSITE" id="PS00211">
    <property type="entry name" value="ABC_TRANSPORTER_1"/>
    <property type="match status" value="1"/>
</dbReference>
<dbReference type="PROSITE" id="PS50893">
    <property type="entry name" value="ABC_TRANSPORTER_2"/>
    <property type="match status" value="1"/>
</dbReference>
<dbReference type="PROSITE" id="PS51315">
    <property type="entry name" value="UGPC"/>
    <property type="match status" value="1"/>
</dbReference>
<protein>
    <recommendedName>
        <fullName evidence="1">sn-glycerol-3-phosphate import ATP-binding protein UgpC</fullName>
        <ecNumber evidence="1">7.6.2.10</ecNumber>
    </recommendedName>
</protein>
<sequence>MASVTLRNVRKTYPGGFEAIKGIDFAVGDGQFCVLVGPSGCGKSTLLRMVAGLETITAGEIDIGGRVVNTIEPADRDIAMVFQNYALYPHMSVYNNMAYGLRNRGMKKPDIDARVREAARILEIEPLLQRKPKQLSGGQRQRVAMGRAIVRQPKVFLFDEPLSNLDAKLRIAMRVEIRKLQRRLATTAIYVTHDQLEAMTLADQLVVMNGGVVEQIGSPLEVYRKPATTFVASFIGAPPMNLMQLDGDALRGQLAGGAGAGVLGIRPEDLTLLTDGSAPEGGVAIELRIEAVERVGPESFVYGSRSNGGAAVSPHPGERPAGEIIVRVPGEIAPELGARVTVAAPRQKLHLFDAGGRRRID</sequence>